<name>ISCR_VIBC1</name>
<accession>A7MU47</accession>
<protein>
    <recommendedName>
        <fullName evidence="1">HTH-type transcriptional regulator IscR</fullName>
    </recommendedName>
</protein>
<evidence type="ECO:0000255" key="1">
    <source>
        <dbReference type="HAMAP-Rule" id="MF_01176"/>
    </source>
</evidence>
<keyword id="KW-0001">2Fe-2S</keyword>
<keyword id="KW-0010">Activator</keyword>
<keyword id="KW-0238">DNA-binding</keyword>
<keyword id="KW-0408">Iron</keyword>
<keyword id="KW-0411">Iron-sulfur</keyword>
<keyword id="KW-0479">Metal-binding</keyword>
<keyword id="KW-0678">Repressor</keyword>
<keyword id="KW-0804">Transcription</keyword>
<keyword id="KW-0805">Transcription regulation</keyword>
<dbReference type="EMBL" id="CP000789">
    <property type="protein sequence ID" value="ABU70047.1"/>
    <property type="molecule type" value="Genomic_DNA"/>
</dbReference>
<dbReference type="RefSeq" id="WP_012127086.1">
    <property type="nucleotide sequence ID" value="NC_009783.1"/>
</dbReference>
<dbReference type="SMR" id="A7MU47"/>
<dbReference type="KEGG" id="vha:VIBHAR_01054"/>
<dbReference type="PATRIC" id="fig|338187.25.peg.1574"/>
<dbReference type="Proteomes" id="UP000008152">
    <property type="component" value="Chromosome I"/>
</dbReference>
<dbReference type="GO" id="GO:0005829">
    <property type="term" value="C:cytosol"/>
    <property type="evidence" value="ECO:0007669"/>
    <property type="project" value="TreeGrafter"/>
</dbReference>
<dbReference type="GO" id="GO:0051537">
    <property type="term" value="F:2 iron, 2 sulfur cluster binding"/>
    <property type="evidence" value="ECO:0007669"/>
    <property type="project" value="UniProtKB-KW"/>
</dbReference>
<dbReference type="GO" id="GO:0003700">
    <property type="term" value="F:DNA-binding transcription factor activity"/>
    <property type="evidence" value="ECO:0007669"/>
    <property type="project" value="UniProtKB-UniRule"/>
</dbReference>
<dbReference type="GO" id="GO:0003690">
    <property type="term" value="F:double-stranded DNA binding"/>
    <property type="evidence" value="ECO:0007669"/>
    <property type="project" value="UniProtKB-UniRule"/>
</dbReference>
<dbReference type="GO" id="GO:0005506">
    <property type="term" value="F:iron ion binding"/>
    <property type="evidence" value="ECO:0007669"/>
    <property type="project" value="UniProtKB-UniRule"/>
</dbReference>
<dbReference type="FunFam" id="1.10.10.10:FF:000026">
    <property type="entry name" value="HTH-type transcriptional regulator IscR"/>
    <property type="match status" value="1"/>
</dbReference>
<dbReference type="Gene3D" id="1.10.10.10">
    <property type="entry name" value="Winged helix-like DNA-binding domain superfamily/Winged helix DNA-binding domain"/>
    <property type="match status" value="1"/>
</dbReference>
<dbReference type="HAMAP" id="MF_01176">
    <property type="entry name" value="HTH_type_IscR"/>
    <property type="match status" value="1"/>
</dbReference>
<dbReference type="InterPro" id="IPR010242">
    <property type="entry name" value="TF_HTH_IscR"/>
</dbReference>
<dbReference type="InterPro" id="IPR030489">
    <property type="entry name" value="TR_Rrf2-type_CS"/>
</dbReference>
<dbReference type="InterPro" id="IPR000944">
    <property type="entry name" value="Tscrpt_reg_Rrf2"/>
</dbReference>
<dbReference type="InterPro" id="IPR036388">
    <property type="entry name" value="WH-like_DNA-bd_sf"/>
</dbReference>
<dbReference type="InterPro" id="IPR036390">
    <property type="entry name" value="WH_DNA-bd_sf"/>
</dbReference>
<dbReference type="NCBIfam" id="TIGR02010">
    <property type="entry name" value="IscR"/>
    <property type="match status" value="1"/>
</dbReference>
<dbReference type="NCBIfam" id="NF008110">
    <property type="entry name" value="PRK10857.1"/>
    <property type="match status" value="1"/>
</dbReference>
<dbReference type="NCBIfam" id="TIGR00738">
    <property type="entry name" value="rrf2_super"/>
    <property type="match status" value="1"/>
</dbReference>
<dbReference type="PANTHER" id="PTHR33221:SF5">
    <property type="entry name" value="HTH-TYPE TRANSCRIPTIONAL REGULATOR ISCR"/>
    <property type="match status" value="1"/>
</dbReference>
<dbReference type="PANTHER" id="PTHR33221">
    <property type="entry name" value="WINGED HELIX-TURN-HELIX TRANSCRIPTIONAL REGULATOR, RRF2 FAMILY"/>
    <property type="match status" value="1"/>
</dbReference>
<dbReference type="Pfam" id="PF02082">
    <property type="entry name" value="Rrf2"/>
    <property type="match status" value="1"/>
</dbReference>
<dbReference type="SUPFAM" id="SSF46785">
    <property type="entry name" value="Winged helix' DNA-binding domain"/>
    <property type="match status" value="1"/>
</dbReference>
<dbReference type="PROSITE" id="PS01332">
    <property type="entry name" value="HTH_RRF2_1"/>
    <property type="match status" value="1"/>
</dbReference>
<dbReference type="PROSITE" id="PS51197">
    <property type="entry name" value="HTH_RRF2_2"/>
    <property type="match status" value="1"/>
</dbReference>
<comment type="function">
    <text evidence="1">Regulates the transcription of several operons and genes involved in the biogenesis of Fe-S clusters and Fe-S-containing proteins.</text>
</comment>
<comment type="cofactor">
    <cofactor evidence="1">
        <name>[2Fe-2S] cluster</name>
        <dbReference type="ChEBI" id="CHEBI:190135"/>
    </cofactor>
    <text evidence="1">Binds 1 [2Fe-2S] cluster.</text>
</comment>
<feature type="chain" id="PRO_1000085426" description="HTH-type transcriptional regulator IscR">
    <location>
        <begin position="1"/>
        <end position="168"/>
    </location>
</feature>
<feature type="domain" description="HTH rrf2-type" evidence="1">
    <location>
        <begin position="2"/>
        <end position="131"/>
    </location>
</feature>
<feature type="DNA-binding region" description="H-T-H motif" evidence="1">
    <location>
        <begin position="28"/>
        <end position="51"/>
    </location>
</feature>
<feature type="binding site" evidence="1">
    <location>
        <position position="92"/>
    </location>
    <ligand>
        <name>[2Fe-2S] cluster</name>
        <dbReference type="ChEBI" id="CHEBI:190135"/>
    </ligand>
</feature>
<feature type="binding site" evidence="1">
    <location>
        <position position="98"/>
    </location>
    <ligand>
        <name>[2Fe-2S] cluster</name>
        <dbReference type="ChEBI" id="CHEBI:190135"/>
    </ligand>
</feature>
<feature type="binding site" evidence="1">
    <location>
        <position position="104"/>
    </location>
    <ligand>
        <name>[2Fe-2S] cluster</name>
        <dbReference type="ChEBI" id="CHEBI:190135"/>
    </ligand>
</feature>
<gene>
    <name evidence="1" type="primary">iscR</name>
    <name type="ordered locus">VIBHAR_01054</name>
</gene>
<organism>
    <name type="scientific">Vibrio campbellii (strain ATCC BAA-1116)</name>
    <dbReference type="NCBI Taxonomy" id="2902295"/>
    <lineage>
        <taxon>Bacteria</taxon>
        <taxon>Pseudomonadati</taxon>
        <taxon>Pseudomonadota</taxon>
        <taxon>Gammaproteobacteria</taxon>
        <taxon>Vibrionales</taxon>
        <taxon>Vibrionaceae</taxon>
        <taxon>Vibrio</taxon>
    </lineage>
</organism>
<proteinExistence type="inferred from homology"/>
<sequence length="168" mass="17935">MKLTSKGRYAVTAMLDVALHSQQNPVPLADISERQGISLSYLEQLFSKLRKAGLVASVRGPGGGYRLGADAHSIAIGTVIAAVDESVDATKCQGKGDCQGGTRCLTHTLWRDLSSRISDFLNNITLGELMKDNEVLEISDRQDIDLAVTHGLSNKNTTAAPIGVNVRS</sequence>
<reference key="1">
    <citation type="submission" date="2007-08" db="EMBL/GenBank/DDBJ databases">
        <authorList>
            <consortium name="The Vibrio harveyi Genome Sequencing Project"/>
            <person name="Bassler B."/>
            <person name="Clifton S.W."/>
            <person name="Fulton L."/>
            <person name="Delehaunty K."/>
            <person name="Fronick C."/>
            <person name="Harrison M."/>
            <person name="Markivic C."/>
            <person name="Fulton R."/>
            <person name="Tin-Wollam A.-M."/>
            <person name="Shah N."/>
            <person name="Pepin K."/>
            <person name="Nash W."/>
            <person name="Thiruvilangam P."/>
            <person name="Bhonagiri V."/>
            <person name="Waters C."/>
            <person name="Tu K.C."/>
            <person name="Irgon J."/>
            <person name="Wilson R.K."/>
        </authorList>
    </citation>
    <scope>NUCLEOTIDE SEQUENCE [LARGE SCALE GENOMIC DNA]</scope>
    <source>
        <strain>ATCC BAA-1116 / BB120</strain>
    </source>
</reference>